<dbReference type="EC" id="3.6.1.23" evidence="1"/>
<dbReference type="EMBL" id="CP000383">
    <property type="protein sequence ID" value="ABG57313.1"/>
    <property type="molecule type" value="Genomic_DNA"/>
</dbReference>
<dbReference type="SMR" id="Q11Z53"/>
<dbReference type="STRING" id="269798.CHU_0019"/>
<dbReference type="KEGG" id="chu:CHU_0019"/>
<dbReference type="eggNOG" id="COG0756">
    <property type="taxonomic scope" value="Bacteria"/>
</dbReference>
<dbReference type="HOGENOM" id="CLU_068508_1_2_10"/>
<dbReference type="OrthoDB" id="9809956at2"/>
<dbReference type="UniPathway" id="UPA00610">
    <property type="reaction ID" value="UER00666"/>
</dbReference>
<dbReference type="Proteomes" id="UP000001822">
    <property type="component" value="Chromosome"/>
</dbReference>
<dbReference type="GO" id="GO:0004170">
    <property type="term" value="F:dUTP diphosphatase activity"/>
    <property type="evidence" value="ECO:0007669"/>
    <property type="project" value="UniProtKB-UniRule"/>
</dbReference>
<dbReference type="GO" id="GO:0000287">
    <property type="term" value="F:magnesium ion binding"/>
    <property type="evidence" value="ECO:0007669"/>
    <property type="project" value="UniProtKB-UniRule"/>
</dbReference>
<dbReference type="GO" id="GO:0006226">
    <property type="term" value="P:dUMP biosynthetic process"/>
    <property type="evidence" value="ECO:0007669"/>
    <property type="project" value="UniProtKB-UniRule"/>
</dbReference>
<dbReference type="GO" id="GO:0046081">
    <property type="term" value="P:dUTP catabolic process"/>
    <property type="evidence" value="ECO:0007669"/>
    <property type="project" value="InterPro"/>
</dbReference>
<dbReference type="CDD" id="cd07557">
    <property type="entry name" value="trimeric_dUTPase"/>
    <property type="match status" value="1"/>
</dbReference>
<dbReference type="FunFam" id="2.70.40.10:FF:000002">
    <property type="entry name" value="dUTP diphosphatase"/>
    <property type="match status" value="1"/>
</dbReference>
<dbReference type="Gene3D" id="2.70.40.10">
    <property type="match status" value="1"/>
</dbReference>
<dbReference type="HAMAP" id="MF_00116">
    <property type="entry name" value="dUTPase_bact"/>
    <property type="match status" value="1"/>
</dbReference>
<dbReference type="InterPro" id="IPR008181">
    <property type="entry name" value="dUTPase"/>
</dbReference>
<dbReference type="InterPro" id="IPR029054">
    <property type="entry name" value="dUTPase-like"/>
</dbReference>
<dbReference type="InterPro" id="IPR036157">
    <property type="entry name" value="dUTPase-like_sf"/>
</dbReference>
<dbReference type="InterPro" id="IPR033704">
    <property type="entry name" value="dUTPase_trimeric"/>
</dbReference>
<dbReference type="NCBIfam" id="TIGR00576">
    <property type="entry name" value="dut"/>
    <property type="match status" value="1"/>
</dbReference>
<dbReference type="NCBIfam" id="NF001862">
    <property type="entry name" value="PRK00601.1"/>
    <property type="match status" value="1"/>
</dbReference>
<dbReference type="PANTHER" id="PTHR11241">
    <property type="entry name" value="DEOXYURIDINE 5'-TRIPHOSPHATE NUCLEOTIDOHYDROLASE"/>
    <property type="match status" value="1"/>
</dbReference>
<dbReference type="PANTHER" id="PTHR11241:SF0">
    <property type="entry name" value="DEOXYURIDINE 5'-TRIPHOSPHATE NUCLEOTIDOHYDROLASE"/>
    <property type="match status" value="1"/>
</dbReference>
<dbReference type="Pfam" id="PF00692">
    <property type="entry name" value="dUTPase"/>
    <property type="match status" value="1"/>
</dbReference>
<dbReference type="SUPFAM" id="SSF51283">
    <property type="entry name" value="dUTPase-like"/>
    <property type="match status" value="1"/>
</dbReference>
<accession>Q11Z53</accession>
<organism>
    <name type="scientific">Cytophaga hutchinsonii (strain ATCC 33406 / DSM 1761 / CIP 103989 / NBRC 15051 / NCIMB 9469 / D465)</name>
    <dbReference type="NCBI Taxonomy" id="269798"/>
    <lineage>
        <taxon>Bacteria</taxon>
        <taxon>Pseudomonadati</taxon>
        <taxon>Bacteroidota</taxon>
        <taxon>Cytophagia</taxon>
        <taxon>Cytophagales</taxon>
        <taxon>Cytophagaceae</taxon>
        <taxon>Cytophaga</taxon>
    </lineage>
</organism>
<evidence type="ECO:0000255" key="1">
    <source>
        <dbReference type="HAMAP-Rule" id="MF_00116"/>
    </source>
</evidence>
<feature type="chain" id="PRO_1000015464" description="Deoxyuridine 5'-triphosphate nucleotidohydrolase">
    <location>
        <begin position="1"/>
        <end position="154"/>
    </location>
</feature>
<feature type="binding site" evidence="1">
    <location>
        <begin position="74"/>
        <end position="76"/>
    </location>
    <ligand>
        <name>substrate</name>
    </ligand>
</feature>
<feature type="binding site" evidence="1">
    <location>
        <position position="87"/>
    </location>
    <ligand>
        <name>substrate</name>
    </ligand>
</feature>
<feature type="binding site" evidence="1">
    <location>
        <begin position="91"/>
        <end position="93"/>
    </location>
    <ligand>
        <name>substrate</name>
    </ligand>
</feature>
<feature type="binding site" evidence="1">
    <location>
        <position position="101"/>
    </location>
    <ligand>
        <name>substrate</name>
    </ligand>
</feature>
<comment type="function">
    <text evidence="1">This enzyme is involved in nucleotide metabolism: it produces dUMP, the immediate precursor of thymidine nucleotides and it decreases the intracellular concentration of dUTP so that uracil cannot be incorporated into DNA.</text>
</comment>
<comment type="catalytic activity">
    <reaction evidence="1">
        <text>dUTP + H2O = dUMP + diphosphate + H(+)</text>
        <dbReference type="Rhea" id="RHEA:10248"/>
        <dbReference type="ChEBI" id="CHEBI:15377"/>
        <dbReference type="ChEBI" id="CHEBI:15378"/>
        <dbReference type="ChEBI" id="CHEBI:33019"/>
        <dbReference type="ChEBI" id="CHEBI:61555"/>
        <dbReference type="ChEBI" id="CHEBI:246422"/>
        <dbReference type="EC" id="3.6.1.23"/>
    </reaction>
</comment>
<comment type="cofactor">
    <cofactor evidence="1">
        <name>Mg(2+)</name>
        <dbReference type="ChEBI" id="CHEBI:18420"/>
    </cofactor>
</comment>
<comment type="pathway">
    <text evidence="1">Pyrimidine metabolism; dUMP biosynthesis; dUMP from dCTP (dUTP route): step 2/2.</text>
</comment>
<comment type="similarity">
    <text evidence="1">Belongs to the dUTPase family.</text>
</comment>
<sequence>MKRCLNKANMTTSVKIVNKSNNALPAYQTAQAAGMDLSAYITEAIVLQPLQRQLVPTGLFIELPEHTEAQIRPRSGLAFKHGITVLNSPGTIDADYRGEIKVLLVNLSNEAFTIQSGERIAQIVIAKVEHAHFVEVEELSDSLRAAAGFGSTGK</sequence>
<proteinExistence type="inferred from homology"/>
<keyword id="KW-0378">Hydrolase</keyword>
<keyword id="KW-0460">Magnesium</keyword>
<keyword id="KW-0479">Metal-binding</keyword>
<keyword id="KW-0546">Nucleotide metabolism</keyword>
<keyword id="KW-1185">Reference proteome</keyword>
<reference key="1">
    <citation type="journal article" date="2007" name="Appl. Environ. Microbiol.">
        <title>Genome sequence of the cellulolytic gliding bacterium Cytophaga hutchinsonii.</title>
        <authorList>
            <person name="Xie G."/>
            <person name="Bruce D.C."/>
            <person name="Challacombe J.F."/>
            <person name="Chertkov O."/>
            <person name="Detter J.C."/>
            <person name="Gilna P."/>
            <person name="Han C.S."/>
            <person name="Lucas S."/>
            <person name="Misra M."/>
            <person name="Myers G.L."/>
            <person name="Richardson P."/>
            <person name="Tapia R."/>
            <person name="Thayer N."/>
            <person name="Thompson L.S."/>
            <person name="Brettin T.S."/>
            <person name="Henrissat B."/>
            <person name="Wilson D.B."/>
            <person name="McBride M.J."/>
        </authorList>
    </citation>
    <scope>NUCLEOTIDE SEQUENCE [LARGE SCALE GENOMIC DNA]</scope>
    <source>
        <strain>ATCC 33406 / DSM 1761 / JCM 20678 / CIP 103989 / IAM 12607 / NBRC 15051 / NCIMB 9469 / D465</strain>
    </source>
</reference>
<protein>
    <recommendedName>
        <fullName evidence="1">Deoxyuridine 5'-triphosphate nucleotidohydrolase</fullName>
        <shortName evidence="1">dUTPase</shortName>
        <ecNumber evidence="1">3.6.1.23</ecNumber>
    </recommendedName>
    <alternativeName>
        <fullName evidence="1">dUTP pyrophosphatase</fullName>
    </alternativeName>
</protein>
<name>DUT_CYTH3</name>
<gene>
    <name evidence="1" type="primary">dut</name>
    <name type="ordered locus">CHU_0019</name>
</gene>